<name>BARA_SHIFL</name>
<accession>P59342</accession>
<dbReference type="EC" id="2.7.13.3"/>
<dbReference type="EMBL" id="AE005674">
    <property type="protein sequence ID" value="AAN44287.1"/>
    <property type="molecule type" value="Genomic_DNA"/>
</dbReference>
<dbReference type="EMBL" id="AE014073">
    <property type="protein sequence ID" value="AAP18112.1"/>
    <property type="molecule type" value="Genomic_DNA"/>
</dbReference>
<dbReference type="RefSeq" id="NP_708580.1">
    <property type="nucleotide sequence ID" value="NC_004337.2"/>
</dbReference>
<dbReference type="RefSeq" id="WP_000186422.1">
    <property type="nucleotide sequence ID" value="NZ_WPGW01000063.1"/>
</dbReference>
<dbReference type="SMR" id="P59342"/>
<dbReference type="STRING" id="198214.SF2799"/>
<dbReference type="PaxDb" id="198214-SF2799"/>
<dbReference type="GeneID" id="1026816"/>
<dbReference type="KEGG" id="sfl:SF2799"/>
<dbReference type="KEGG" id="sfx:S2993"/>
<dbReference type="PATRIC" id="fig|198214.7.peg.3332"/>
<dbReference type="HOGENOM" id="CLU_000445_104_1_6"/>
<dbReference type="BRENDA" id="2.7.13.3">
    <property type="organism ID" value="5712"/>
</dbReference>
<dbReference type="Proteomes" id="UP000001006">
    <property type="component" value="Chromosome"/>
</dbReference>
<dbReference type="Proteomes" id="UP000002673">
    <property type="component" value="Chromosome"/>
</dbReference>
<dbReference type="GO" id="GO:0005886">
    <property type="term" value="C:plasma membrane"/>
    <property type="evidence" value="ECO:0007669"/>
    <property type="project" value="UniProtKB-SubCell"/>
</dbReference>
<dbReference type="GO" id="GO:0005524">
    <property type="term" value="F:ATP binding"/>
    <property type="evidence" value="ECO:0007669"/>
    <property type="project" value="UniProtKB-KW"/>
</dbReference>
<dbReference type="GO" id="GO:0000155">
    <property type="term" value="F:phosphorelay sensor kinase activity"/>
    <property type="evidence" value="ECO:0007669"/>
    <property type="project" value="InterPro"/>
</dbReference>
<dbReference type="CDD" id="cd06225">
    <property type="entry name" value="HAMP"/>
    <property type="match status" value="1"/>
</dbReference>
<dbReference type="CDD" id="cd16922">
    <property type="entry name" value="HATPase_EvgS-ArcB-TorS-like"/>
    <property type="match status" value="1"/>
</dbReference>
<dbReference type="CDD" id="cd00082">
    <property type="entry name" value="HisKA"/>
    <property type="match status" value="1"/>
</dbReference>
<dbReference type="CDD" id="cd00088">
    <property type="entry name" value="HPT"/>
    <property type="match status" value="1"/>
</dbReference>
<dbReference type="CDD" id="cd17546">
    <property type="entry name" value="REC_hyHK_CKI1_RcsC-like"/>
    <property type="match status" value="1"/>
</dbReference>
<dbReference type="FunFam" id="1.10.287.130:FF:000003">
    <property type="entry name" value="Histidine kinase"/>
    <property type="match status" value="1"/>
</dbReference>
<dbReference type="FunFam" id="1.20.120.160:FF:000002">
    <property type="entry name" value="Histidine kinase"/>
    <property type="match status" value="1"/>
</dbReference>
<dbReference type="FunFam" id="3.30.565.10:FF:000020">
    <property type="entry name" value="Histidine kinase"/>
    <property type="match status" value="1"/>
</dbReference>
<dbReference type="FunFam" id="3.40.50.2300:FF:000109">
    <property type="entry name" value="Histidine kinase"/>
    <property type="match status" value="1"/>
</dbReference>
<dbReference type="Gene3D" id="1.10.287.130">
    <property type="match status" value="1"/>
</dbReference>
<dbReference type="Gene3D" id="3.40.50.2300">
    <property type="match status" value="1"/>
</dbReference>
<dbReference type="Gene3D" id="6.10.340.10">
    <property type="match status" value="1"/>
</dbReference>
<dbReference type="Gene3D" id="3.30.565.10">
    <property type="entry name" value="Histidine kinase-like ATPase, C-terminal domain"/>
    <property type="match status" value="1"/>
</dbReference>
<dbReference type="Gene3D" id="1.20.120.160">
    <property type="entry name" value="HPT domain"/>
    <property type="match status" value="1"/>
</dbReference>
<dbReference type="InterPro" id="IPR011006">
    <property type="entry name" value="CheY-like_superfamily"/>
</dbReference>
<dbReference type="InterPro" id="IPR003660">
    <property type="entry name" value="HAMP_dom"/>
</dbReference>
<dbReference type="InterPro" id="IPR036890">
    <property type="entry name" value="HATPase_C_sf"/>
</dbReference>
<dbReference type="InterPro" id="IPR005467">
    <property type="entry name" value="His_kinase_dom"/>
</dbReference>
<dbReference type="InterPro" id="IPR003661">
    <property type="entry name" value="HisK_dim/P_dom"/>
</dbReference>
<dbReference type="InterPro" id="IPR036097">
    <property type="entry name" value="HisK_dim/P_sf"/>
</dbReference>
<dbReference type="InterPro" id="IPR019247">
    <property type="entry name" value="Histidine_kinase_BarA_N"/>
</dbReference>
<dbReference type="InterPro" id="IPR036641">
    <property type="entry name" value="HPT_dom_sf"/>
</dbReference>
<dbReference type="InterPro" id="IPR004358">
    <property type="entry name" value="Sig_transdc_His_kin-like_C"/>
</dbReference>
<dbReference type="InterPro" id="IPR008207">
    <property type="entry name" value="Sig_transdc_His_kin_Hpt_dom"/>
</dbReference>
<dbReference type="InterPro" id="IPR001789">
    <property type="entry name" value="Sig_transdc_resp-reg_receiver"/>
</dbReference>
<dbReference type="NCBIfam" id="NF008318">
    <property type="entry name" value="PRK11107.1"/>
    <property type="match status" value="1"/>
</dbReference>
<dbReference type="PANTHER" id="PTHR45339">
    <property type="entry name" value="HYBRID SIGNAL TRANSDUCTION HISTIDINE KINASE J"/>
    <property type="match status" value="1"/>
</dbReference>
<dbReference type="PANTHER" id="PTHR45339:SF1">
    <property type="entry name" value="HYBRID SIGNAL TRANSDUCTION HISTIDINE KINASE J"/>
    <property type="match status" value="1"/>
</dbReference>
<dbReference type="Pfam" id="PF00672">
    <property type="entry name" value="HAMP"/>
    <property type="match status" value="1"/>
</dbReference>
<dbReference type="Pfam" id="PF02518">
    <property type="entry name" value="HATPase_c"/>
    <property type="match status" value="1"/>
</dbReference>
<dbReference type="Pfam" id="PF00512">
    <property type="entry name" value="HisKA"/>
    <property type="match status" value="1"/>
</dbReference>
<dbReference type="Pfam" id="PF01627">
    <property type="entry name" value="Hpt"/>
    <property type="match status" value="1"/>
</dbReference>
<dbReference type="Pfam" id="PF00072">
    <property type="entry name" value="Response_reg"/>
    <property type="match status" value="1"/>
</dbReference>
<dbReference type="Pfam" id="PF09984">
    <property type="entry name" value="sCache_4"/>
    <property type="match status" value="1"/>
</dbReference>
<dbReference type="PRINTS" id="PR00344">
    <property type="entry name" value="BCTRLSENSOR"/>
</dbReference>
<dbReference type="SMART" id="SM00304">
    <property type="entry name" value="HAMP"/>
    <property type="match status" value="1"/>
</dbReference>
<dbReference type="SMART" id="SM00387">
    <property type="entry name" value="HATPase_c"/>
    <property type="match status" value="1"/>
</dbReference>
<dbReference type="SMART" id="SM00388">
    <property type="entry name" value="HisKA"/>
    <property type="match status" value="1"/>
</dbReference>
<dbReference type="SMART" id="SM00073">
    <property type="entry name" value="HPT"/>
    <property type="match status" value="1"/>
</dbReference>
<dbReference type="SMART" id="SM00448">
    <property type="entry name" value="REC"/>
    <property type="match status" value="1"/>
</dbReference>
<dbReference type="SUPFAM" id="SSF55874">
    <property type="entry name" value="ATPase domain of HSP90 chaperone/DNA topoisomerase II/histidine kinase"/>
    <property type="match status" value="1"/>
</dbReference>
<dbReference type="SUPFAM" id="SSF52172">
    <property type="entry name" value="CheY-like"/>
    <property type="match status" value="1"/>
</dbReference>
<dbReference type="SUPFAM" id="SSF158472">
    <property type="entry name" value="HAMP domain-like"/>
    <property type="match status" value="1"/>
</dbReference>
<dbReference type="SUPFAM" id="SSF47226">
    <property type="entry name" value="Histidine-containing phosphotransfer domain, HPT domain"/>
    <property type="match status" value="1"/>
</dbReference>
<dbReference type="SUPFAM" id="SSF47384">
    <property type="entry name" value="Homodimeric domain of signal transducing histidine kinase"/>
    <property type="match status" value="1"/>
</dbReference>
<dbReference type="PROSITE" id="PS50885">
    <property type="entry name" value="HAMP"/>
    <property type="match status" value="1"/>
</dbReference>
<dbReference type="PROSITE" id="PS50109">
    <property type="entry name" value="HIS_KIN"/>
    <property type="match status" value="1"/>
</dbReference>
<dbReference type="PROSITE" id="PS50894">
    <property type="entry name" value="HPT"/>
    <property type="match status" value="1"/>
</dbReference>
<dbReference type="PROSITE" id="PS50110">
    <property type="entry name" value="RESPONSE_REGULATORY"/>
    <property type="match status" value="1"/>
</dbReference>
<feature type="chain" id="PRO_0000074700" description="Signal transduction histidine-protein kinase BarA">
    <location>
        <begin position="1"/>
        <end position="918"/>
    </location>
</feature>
<feature type="topological domain" description="Cytoplasmic" evidence="2">
    <location>
        <begin position="1"/>
        <end position="10"/>
    </location>
</feature>
<feature type="transmembrane region" description="Helical" evidence="2">
    <location>
        <begin position="11"/>
        <end position="31"/>
    </location>
</feature>
<feature type="topological domain" description="Periplasmic" evidence="2">
    <location>
        <begin position="32"/>
        <end position="175"/>
    </location>
</feature>
<feature type="transmembrane region" description="Helical" evidence="2">
    <location>
        <begin position="176"/>
        <end position="196"/>
    </location>
</feature>
<feature type="topological domain" description="Cytoplasmic" evidence="2">
    <location>
        <begin position="197"/>
        <end position="918"/>
    </location>
</feature>
<feature type="domain" description="HAMP" evidence="3">
    <location>
        <begin position="200"/>
        <end position="252"/>
    </location>
</feature>
<feature type="domain" description="Histidine kinase" evidence="4">
    <location>
        <begin position="299"/>
        <end position="520"/>
    </location>
</feature>
<feature type="domain" description="Response regulatory" evidence="6">
    <location>
        <begin position="669"/>
        <end position="785"/>
    </location>
</feature>
<feature type="domain" description="HPt" evidence="5">
    <location>
        <begin position="822"/>
        <end position="918"/>
    </location>
</feature>
<feature type="modified residue" description="Phosphohistidine; by autocatalysis" evidence="4">
    <location>
        <position position="302"/>
    </location>
</feature>
<feature type="modified residue" description="4-aspartylphosphate" evidence="6">
    <location>
        <position position="718"/>
    </location>
</feature>
<feature type="modified residue" description="Phosphohistidine" evidence="5">
    <location>
        <position position="861"/>
    </location>
</feature>
<sequence>MTNYSLRARMMILILAPTVLIGLLLSIFFVVHRYNDLQRQLEDAGASIIEPLAVSTEYGMSLQNRESIGQLISVLHRRHSDIVRAISVYDENNRLFVTSNFHLDPSSMQLGSNVPFPRQLTVTRDGDIMILRTPIISESYSPDESPSSDAKNSQNMLGYIALELDLKSVRLQQYKEIFISCVMMLFCIGIALIFGWRLMRDVTGPIRNMVNTVDRIRRGQLDSRVEGFMLGELDMLKNGINSMAMSLAAYHEEMQHNIDQATSDLRETLEQMEIQNVELDLAKKRAQEAARIKSEFLANMSHELRTPLNGVIGFTRLTLKTELTPTQRDHLNTIERSANNLLAIINDVLDFSKLEAGKLILESIPFPLRSTLDEVVTLLAHSSHDKGLELTLNIKSDVPDNVIGDPLRLQQIITNLVGNAIKFTENGNIDILVEKRALSNTKVQIEVQIRDTGIGIPERDQSRLFQAFRQADASISRRHGGTGLGLVITQKLVNEMGGDISFHSQPNRGSTFWFHINLDLNPNIIIEGPSIQCLAGKRLAYVEPNSAAAQCTLDILSETPLEVVYSPTFSALPPAHYDMMLLGIAVTFREPLTMQHERLAKAVSMTDFLMLALPCHAQVNAEKLKQDGIGACLLKPLTPTRLLPALTEFCHHKQNTLLPVTDESKLAMTVMAVDDNPANLKLIGALLEDMVQHVELCDSGHQAVERAKQMPFDLILMDIQMPDMDGIRACELIHQLPHQRQTPVIAVTAHAMAGQKEKLLGAGMSDYLAKPIEEERLHNLLLRYKPGSGISSRVVTPEVNEIVVNPNATLDWQLALRQAAGKTDLARDMLQMLLDFLPEVRNKVEEQLAGENPEGLVDLIHKLHGSCGYSGVPRMKNLCQLIEQQLRSGTKEEDLEPELLELLDEMDNVAREASKILG</sequence>
<gene>
    <name type="primary">barA</name>
    <name type="ordered locus">SF2799</name>
    <name type="ordered locus">S2993</name>
</gene>
<protein>
    <recommendedName>
        <fullName>Signal transduction histidine-protein kinase BarA</fullName>
        <ecNumber>2.7.13.3</ecNumber>
    </recommendedName>
</protein>
<organism>
    <name type="scientific">Shigella flexneri</name>
    <dbReference type="NCBI Taxonomy" id="623"/>
    <lineage>
        <taxon>Bacteria</taxon>
        <taxon>Pseudomonadati</taxon>
        <taxon>Pseudomonadota</taxon>
        <taxon>Gammaproteobacteria</taxon>
        <taxon>Enterobacterales</taxon>
        <taxon>Enterobacteriaceae</taxon>
        <taxon>Shigella</taxon>
    </lineage>
</organism>
<keyword id="KW-0067">ATP-binding</keyword>
<keyword id="KW-0997">Cell inner membrane</keyword>
<keyword id="KW-1003">Cell membrane</keyword>
<keyword id="KW-0418">Kinase</keyword>
<keyword id="KW-0472">Membrane</keyword>
<keyword id="KW-0547">Nucleotide-binding</keyword>
<keyword id="KW-0597">Phosphoprotein</keyword>
<keyword id="KW-1185">Reference proteome</keyword>
<keyword id="KW-0804">Transcription</keyword>
<keyword id="KW-0805">Transcription regulation</keyword>
<keyword id="KW-0808">Transferase</keyword>
<keyword id="KW-0812">Transmembrane</keyword>
<keyword id="KW-1133">Transmembrane helix</keyword>
<keyword id="KW-0902">Two-component regulatory system</keyword>
<reference key="1">
    <citation type="journal article" date="2002" name="Nucleic Acids Res.">
        <title>Genome sequence of Shigella flexneri 2a: insights into pathogenicity through comparison with genomes of Escherichia coli K12 and O157.</title>
        <authorList>
            <person name="Jin Q."/>
            <person name="Yuan Z."/>
            <person name="Xu J."/>
            <person name="Wang Y."/>
            <person name="Shen Y."/>
            <person name="Lu W."/>
            <person name="Wang J."/>
            <person name="Liu H."/>
            <person name="Yang J."/>
            <person name="Yang F."/>
            <person name="Zhang X."/>
            <person name="Zhang J."/>
            <person name="Yang G."/>
            <person name="Wu H."/>
            <person name="Qu D."/>
            <person name="Dong J."/>
            <person name="Sun L."/>
            <person name="Xue Y."/>
            <person name="Zhao A."/>
            <person name="Gao Y."/>
            <person name="Zhu J."/>
            <person name="Kan B."/>
            <person name="Ding K."/>
            <person name="Chen S."/>
            <person name="Cheng H."/>
            <person name="Yao Z."/>
            <person name="He B."/>
            <person name="Chen R."/>
            <person name="Ma D."/>
            <person name="Qiang B."/>
            <person name="Wen Y."/>
            <person name="Hou Y."/>
            <person name="Yu J."/>
        </authorList>
    </citation>
    <scope>NUCLEOTIDE SEQUENCE [LARGE SCALE GENOMIC DNA]</scope>
    <source>
        <strain>301 / Serotype 2a</strain>
    </source>
</reference>
<reference key="2">
    <citation type="journal article" date="2003" name="Infect. Immun.">
        <title>Complete genome sequence and comparative genomics of Shigella flexneri serotype 2a strain 2457T.</title>
        <authorList>
            <person name="Wei J."/>
            <person name="Goldberg M.B."/>
            <person name="Burland V."/>
            <person name="Venkatesan M.M."/>
            <person name="Deng W."/>
            <person name="Fournier G."/>
            <person name="Mayhew G.F."/>
            <person name="Plunkett G. III"/>
            <person name="Rose D.J."/>
            <person name="Darling A."/>
            <person name="Mau B."/>
            <person name="Perna N.T."/>
            <person name="Payne S.M."/>
            <person name="Runyen-Janecky L.J."/>
            <person name="Zhou S."/>
            <person name="Schwartz D.C."/>
            <person name="Blattner F.R."/>
        </authorList>
    </citation>
    <scope>NUCLEOTIDE SEQUENCE [LARGE SCALE GENOMIC DNA]</scope>
    <source>
        <strain>ATCC 700930 / 2457T / Serotype 2a</strain>
    </source>
</reference>
<evidence type="ECO:0000250" key="1"/>
<evidence type="ECO:0000255" key="2"/>
<evidence type="ECO:0000255" key="3">
    <source>
        <dbReference type="PROSITE-ProRule" id="PRU00102"/>
    </source>
</evidence>
<evidence type="ECO:0000255" key="4">
    <source>
        <dbReference type="PROSITE-ProRule" id="PRU00107"/>
    </source>
</evidence>
<evidence type="ECO:0000255" key="5">
    <source>
        <dbReference type="PROSITE-ProRule" id="PRU00110"/>
    </source>
</evidence>
<evidence type="ECO:0000255" key="6">
    <source>
        <dbReference type="PROSITE-ProRule" id="PRU00169"/>
    </source>
</evidence>
<comment type="function">
    <text evidence="1">Member of the two-component regulatory system UvrY/BarA involved in the regulation of carbon metabolism via the CsrA/CsrB regulatory system. Phosphorylates UvrY, probably via a four-step phosphorelay (By similarity).</text>
</comment>
<comment type="catalytic activity">
    <reaction>
        <text>ATP + protein L-histidine = ADP + protein N-phospho-L-histidine.</text>
        <dbReference type="EC" id="2.7.13.3"/>
    </reaction>
</comment>
<comment type="subcellular location">
    <subcellularLocation>
        <location evidence="1">Cell inner membrane</location>
        <topology evidence="1">Multi-pass membrane protein</topology>
    </subcellularLocation>
</comment>
<comment type="PTM">
    <text evidence="1">Activation requires a sequential transfer of a phosphate group from a His in the primary transmitter domain, to an Asp in the receiver domain and to a His in the secondary transmitter domain.</text>
</comment>
<proteinExistence type="inferred from homology"/>